<gene>
    <name evidence="1" type="primary">kbaY</name>
    <name type="ordered locus">BWG_2841</name>
</gene>
<name>KBAY_ECOBW</name>
<proteinExistence type="inferred from homology"/>
<protein>
    <recommendedName>
        <fullName evidence="1">D-tagatose-1,6-bisphosphate aldolase subunit KbaY</fullName>
        <shortName evidence="1">TBPA</shortName>
        <shortName evidence="1">TagBP aldolase</shortName>
        <ecNumber evidence="1">4.1.2.40</ecNumber>
    </recommendedName>
    <alternativeName>
        <fullName evidence="1">D-tagatose-bisphosphate aldolase class II</fullName>
    </alternativeName>
    <alternativeName>
        <fullName evidence="1">Ketose 1,6-bisphosphate aldolase class II</fullName>
    </alternativeName>
    <alternativeName>
        <fullName evidence="1">Tagatose-bisphosphate aldolase</fullName>
    </alternativeName>
</protein>
<reference key="1">
    <citation type="journal article" date="2009" name="J. Bacteriol.">
        <title>Genomic sequencing reveals regulatory mutations and recombinational events in the widely used MC4100 lineage of Escherichia coli K-12.</title>
        <authorList>
            <person name="Ferenci T."/>
            <person name="Zhou Z."/>
            <person name="Betteridge T."/>
            <person name="Ren Y."/>
            <person name="Liu Y."/>
            <person name="Feng L."/>
            <person name="Reeves P.R."/>
            <person name="Wang L."/>
        </authorList>
    </citation>
    <scope>NUCLEOTIDE SEQUENCE [LARGE SCALE GENOMIC DNA]</scope>
    <source>
        <strain>K12 / MC4100 / BW2952</strain>
    </source>
</reference>
<sequence>MSIISTKYLLQDAQANGYAVPAFNIHNAETIQAILEVCSEMRSPVILAGTPGTFKHIALEEIYALCSAYSTTYNMPLALHLDHHESLDDIRRKVHAGVRSAMIDGSHFPFAENVKLVKSVVDFCHSQDCSVEAELGRLGGVEDDMSVDAESAFLTDPQEAKRFVELTGVDSLAVAIGTAHGLYSKTPKIDFQRLAEIREVVDVPLVLHGASDVPDEFVRRTIELGVTKVNVATELKIAFAGAVKAWFAENPQGNDPRYYMRVGMDAMKEVVRNKINVCGSANRISA</sequence>
<comment type="function">
    <text evidence="1">Catalytic subunit of the tagatose-1,6-bisphosphate aldolase KbaYZ, which catalyzes the reversible aldol condensation of dihydroxyacetone phosphate (DHAP or glycerone-phosphate) with glyceraldehyde 3-phosphate (G3P) to produce tagatose 1,6-bisphosphate (TBP). Requires KbaZ subunit for full activity and stability.</text>
</comment>
<comment type="catalytic activity">
    <reaction evidence="1">
        <text>D-tagatofuranose 1,6-bisphosphate = D-glyceraldehyde 3-phosphate + dihydroxyacetone phosphate</text>
        <dbReference type="Rhea" id="RHEA:22948"/>
        <dbReference type="ChEBI" id="CHEBI:57642"/>
        <dbReference type="ChEBI" id="CHEBI:58694"/>
        <dbReference type="ChEBI" id="CHEBI:59776"/>
        <dbReference type="EC" id="4.1.2.40"/>
    </reaction>
</comment>
<comment type="cofactor">
    <cofactor evidence="1">
        <name>Zn(2+)</name>
        <dbReference type="ChEBI" id="CHEBI:29105"/>
    </cofactor>
    <text evidence="1">Binds 1 zinc ion per subunit.</text>
</comment>
<comment type="pathway">
    <text evidence="1">Carbohydrate metabolism; D-tagatose 6-phosphate degradation; D-glyceraldehyde 3-phosphate and glycerone phosphate from D-tagatose 6-phosphate: step 2/2.</text>
</comment>
<comment type="subunit">
    <text evidence="1">Homotetramer. Forms a complex with KbaZ.</text>
</comment>
<comment type="similarity">
    <text evidence="1">Belongs to the class II fructose-bisphosphate aldolase family. TagBP aldolase KbaY subfamily.</text>
</comment>
<keyword id="KW-0456">Lyase</keyword>
<keyword id="KW-0479">Metal-binding</keyword>
<keyword id="KW-0862">Zinc</keyword>
<dbReference type="EC" id="4.1.2.40" evidence="1"/>
<dbReference type="EMBL" id="CP001396">
    <property type="protein sequence ID" value="ACR65610.1"/>
    <property type="molecule type" value="Genomic_DNA"/>
</dbReference>
<dbReference type="RefSeq" id="WP_000022766.1">
    <property type="nucleotide sequence ID" value="NC_012759.1"/>
</dbReference>
<dbReference type="SMR" id="C4ZR47"/>
<dbReference type="GeneID" id="75203745"/>
<dbReference type="KEGG" id="ebw:BWG_2841"/>
<dbReference type="HOGENOM" id="CLU_040088_0_1_6"/>
<dbReference type="UniPathway" id="UPA00704">
    <property type="reaction ID" value="UER00716"/>
</dbReference>
<dbReference type="GO" id="GO:0005829">
    <property type="term" value="C:cytosol"/>
    <property type="evidence" value="ECO:0007669"/>
    <property type="project" value="TreeGrafter"/>
</dbReference>
<dbReference type="GO" id="GO:0009025">
    <property type="term" value="F:tagatose-bisphosphate aldolase activity"/>
    <property type="evidence" value="ECO:0007669"/>
    <property type="project" value="UniProtKB-UniRule"/>
</dbReference>
<dbReference type="GO" id="GO:0008270">
    <property type="term" value="F:zinc ion binding"/>
    <property type="evidence" value="ECO:0007669"/>
    <property type="project" value="UniProtKB-UniRule"/>
</dbReference>
<dbReference type="GO" id="GO:0005975">
    <property type="term" value="P:carbohydrate metabolic process"/>
    <property type="evidence" value="ECO:0007669"/>
    <property type="project" value="InterPro"/>
</dbReference>
<dbReference type="GO" id="GO:2001059">
    <property type="term" value="P:D-tagatose 6-phosphate catabolic process"/>
    <property type="evidence" value="ECO:0007669"/>
    <property type="project" value="UniProtKB-UniRule"/>
</dbReference>
<dbReference type="CDD" id="cd00453">
    <property type="entry name" value="FTBP_aldolase_II"/>
    <property type="match status" value="1"/>
</dbReference>
<dbReference type="FunFam" id="3.20.20.70:FF:000043">
    <property type="entry name" value="D-tagatose-1,6-bisphosphate aldolase subunit GatY"/>
    <property type="match status" value="1"/>
</dbReference>
<dbReference type="Gene3D" id="3.20.20.70">
    <property type="entry name" value="Aldolase class I"/>
    <property type="match status" value="1"/>
</dbReference>
<dbReference type="HAMAP" id="MF_01293">
    <property type="entry name" value="TagBP_aldolase_KbaY"/>
    <property type="match status" value="1"/>
</dbReference>
<dbReference type="InterPro" id="IPR013785">
    <property type="entry name" value="Aldolase_TIM"/>
</dbReference>
<dbReference type="InterPro" id="IPR050246">
    <property type="entry name" value="Class_II_FBP_aldolase"/>
</dbReference>
<dbReference type="InterPro" id="IPR000771">
    <property type="entry name" value="FBA_II"/>
</dbReference>
<dbReference type="InterPro" id="IPR023788">
    <property type="entry name" value="TagBP_ald_KbaY"/>
</dbReference>
<dbReference type="InterPro" id="IPR011288">
    <property type="entry name" value="TagBP_ald_KbaY/GatY"/>
</dbReference>
<dbReference type="NCBIfam" id="TIGR00167">
    <property type="entry name" value="cbbA"/>
    <property type="match status" value="1"/>
</dbReference>
<dbReference type="NCBIfam" id="NF006626">
    <property type="entry name" value="PRK09195.1"/>
    <property type="match status" value="1"/>
</dbReference>
<dbReference type="NCBIfam" id="NF009374">
    <property type="entry name" value="PRK12737.1"/>
    <property type="match status" value="1"/>
</dbReference>
<dbReference type="NCBIfam" id="NF009375">
    <property type="entry name" value="PRK12738.1"/>
    <property type="match status" value="1"/>
</dbReference>
<dbReference type="NCBIfam" id="TIGR01858">
    <property type="entry name" value="tag_bisphos_ald"/>
    <property type="match status" value="1"/>
</dbReference>
<dbReference type="PANTHER" id="PTHR30304">
    <property type="entry name" value="D-TAGATOSE-1,6-BISPHOSPHATE ALDOLASE"/>
    <property type="match status" value="1"/>
</dbReference>
<dbReference type="PANTHER" id="PTHR30304:SF0">
    <property type="entry name" value="D-TAGATOSE-1,6-BISPHOSPHATE ALDOLASE SUBUNIT GATY-RELATED"/>
    <property type="match status" value="1"/>
</dbReference>
<dbReference type="Pfam" id="PF01116">
    <property type="entry name" value="F_bP_aldolase"/>
    <property type="match status" value="1"/>
</dbReference>
<dbReference type="PIRSF" id="PIRSF001359">
    <property type="entry name" value="F_bP_aldolase_II"/>
    <property type="match status" value="1"/>
</dbReference>
<dbReference type="SUPFAM" id="SSF51569">
    <property type="entry name" value="Aldolase"/>
    <property type="match status" value="1"/>
</dbReference>
<dbReference type="PROSITE" id="PS00602">
    <property type="entry name" value="ALDOLASE_CLASS_II_1"/>
    <property type="match status" value="1"/>
</dbReference>
<dbReference type="PROSITE" id="PS00806">
    <property type="entry name" value="ALDOLASE_CLASS_II_2"/>
    <property type="match status" value="1"/>
</dbReference>
<organism>
    <name type="scientific">Escherichia coli (strain K12 / MC4100 / BW2952)</name>
    <dbReference type="NCBI Taxonomy" id="595496"/>
    <lineage>
        <taxon>Bacteria</taxon>
        <taxon>Pseudomonadati</taxon>
        <taxon>Pseudomonadota</taxon>
        <taxon>Gammaproteobacteria</taxon>
        <taxon>Enterobacterales</taxon>
        <taxon>Enterobacteriaceae</taxon>
        <taxon>Escherichia</taxon>
    </lineage>
</organism>
<feature type="chain" id="PRO_1000214219" description="D-tagatose-1,6-bisphosphate aldolase subunit KbaY">
    <location>
        <begin position="1"/>
        <end position="286"/>
    </location>
</feature>
<feature type="active site" description="Proton donor" evidence="1">
    <location>
        <position position="82"/>
    </location>
</feature>
<feature type="binding site" evidence="1">
    <location>
        <position position="83"/>
    </location>
    <ligand>
        <name>Zn(2+)</name>
        <dbReference type="ChEBI" id="CHEBI:29105"/>
        <note>catalytic</note>
    </ligand>
</feature>
<feature type="binding site" evidence="1">
    <location>
        <position position="180"/>
    </location>
    <ligand>
        <name>Zn(2+)</name>
        <dbReference type="ChEBI" id="CHEBI:29105"/>
        <note>catalytic</note>
    </ligand>
</feature>
<feature type="binding site" evidence="1">
    <location>
        <position position="181"/>
    </location>
    <ligand>
        <name>dihydroxyacetone phosphate</name>
        <dbReference type="ChEBI" id="CHEBI:57642"/>
    </ligand>
</feature>
<feature type="binding site" evidence="1">
    <location>
        <position position="208"/>
    </location>
    <ligand>
        <name>Zn(2+)</name>
        <dbReference type="ChEBI" id="CHEBI:29105"/>
        <note>catalytic</note>
    </ligand>
</feature>
<feature type="binding site" evidence="1">
    <location>
        <begin position="209"/>
        <end position="211"/>
    </location>
    <ligand>
        <name>dihydroxyacetone phosphate</name>
        <dbReference type="ChEBI" id="CHEBI:57642"/>
    </ligand>
</feature>
<feature type="binding site" evidence="1">
    <location>
        <begin position="230"/>
        <end position="233"/>
    </location>
    <ligand>
        <name>dihydroxyacetone phosphate</name>
        <dbReference type="ChEBI" id="CHEBI:57642"/>
    </ligand>
</feature>
<evidence type="ECO:0000255" key="1">
    <source>
        <dbReference type="HAMAP-Rule" id="MF_01293"/>
    </source>
</evidence>
<accession>C4ZR47</accession>